<dbReference type="EC" id="6.3.4.21" evidence="1"/>
<dbReference type="EMBL" id="CP000058">
    <property type="protein sequence ID" value="AAZ35602.1"/>
    <property type="molecule type" value="Genomic_DNA"/>
</dbReference>
<dbReference type="RefSeq" id="WP_002551841.1">
    <property type="nucleotide sequence ID" value="NC_005773.3"/>
</dbReference>
<dbReference type="SMR" id="Q48NY1"/>
<dbReference type="GeneID" id="69857650"/>
<dbReference type="KEGG" id="psp:PSPPH_0588"/>
<dbReference type="eggNOG" id="COG1488">
    <property type="taxonomic scope" value="Bacteria"/>
</dbReference>
<dbReference type="HOGENOM" id="CLU_030991_1_0_6"/>
<dbReference type="UniPathway" id="UPA00253">
    <property type="reaction ID" value="UER00457"/>
</dbReference>
<dbReference type="Proteomes" id="UP000000551">
    <property type="component" value="Chromosome"/>
</dbReference>
<dbReference type="GO" id="GO:0005829">
    <property type="term" value="C:cytosol"/>
    <property type="evidence" value="ECO:0007669"/>
    <property type="project" value="TreeGrafter"/>
</dbReference>
<dbReference type="GO" id="GO:0004516">
    <property type="term" value="F:nicotinate phosphoribosyltransferase activity"/>
    <property type="evidence" value="ECO:0007669"/>
    <property type="project" value="UniProtKB-UniRule"/>
</dbReference>
<dbReference type="GO" id="GO:0034355">
    <property type="term" value="P:NAD biosynthetic process via the salvage pathway"/>
    <property type="evidence" value="ECO:0007669"/>
    <property type="project" value="TreeGrafter"/>
</dbReference>
<dbReference type="CDD" id="cd01401">
    <property type="entry name" value="PncB_like"/>
    <property type="match status" value="1"/>
</dbReference>
<dbReference type="Gene3D" id="3.20.140.10">
    <property type="entry name" value="nicotinate phosphoribosyltransferase"/>
    <property type="match status" value="1"/>
</dbReference>
<dbReference type="HAMAP" id="MF_00570">
    <property type="entry name" value="NAPRTase"/>
    <property type="match status" value="1"/>
</dbReference>
<dbReference type="InterPro" id="IPR041525">
    <property type="entry name" value="N/Namide_PRibTrfase"/>
</dbReference>
<dbReference type="InterPro" id="IPR040727">
    <property type="entry name" value="NAPRTase_N"/>
</dbReference>
<dbReference type="InterPro" id="IPR006406">
    <property type="entry name" value="Nic_PRibTrfase"/>
</dbReference>
<dbReference type="InterPro" id="IPR007229">
    <property type="entry name" value="Nic_PRibTrfase-Fam"/>
</dbReference>
<dbReference type="InterPro" id="IPR036068">
    <property type="entry name" value="Nicotinate_pribotase-like_C"/>
</dbReference>
<dbReference type="NCBIfam" id="TIGR01514">
    <property type="entry name" value="NAPRTase"/>
    <property type="match status" value="1"/>
</dbReference>
<dbReference type="NCBIfam" id="NF003704">
    <property type="entry name" value="PRK05321.1"/>
    <property type="match status" value="1"/>
</dbReference>
<dbReference type="PANTHER" id="PTHR11098">
    <property type="entry name" value="NICOTINATE PHOSPHORIBOSYLTRANSFERASE"/>
    <property type="match status" value="1"/>
</dbReference>
<dbReference type="PANTHER" id="PTHR11098:SF1">
    <property type="entry name" value="NICOTINATE PHOSPHORIBOSYLTRANSFERASE"/>
    <property type="match status" value="1"/>
</dbReference>
<dbReference type="Pfam" id="PF04095">
    <property type="entry name" value="NAPRTase"/>
    <property type="match status" value="1"/>
</dbReference>
<dbReference type="Pfam" id="PF17767">
    <property type="entry name" value="NAPRTase_N"/>
    <property type="match status" value="1"/>
</dbReference>
<dbReference type="PIRSF" id="PIRSF000484">
    <property type="entry name" value="NAPRT"/>
    <property type="match status" value="1"/>
</dbReference>
<dbReference type="SUPFAM" id="SSF51690">
    <property type="entry name" value="Nicotinate/Quinolinate PRTase C-terminal domain-like"/>
    <property type="match status" value="1"/>
</dbReference>
<dbReference type="SUPFAM" id="SSF54675">
    <property type="entry name" value="Nicotinate/Quinolinate PRTase N-terminal domain-like"/>
    <property type="match status" value="1"/>
</dbReference>
<gene>
    <name evidence="1" type="primary">pncB</name>
    <name type="ordered locus">PSPPH_0588</name>
</gene>
<protein>
    <recommendedName>
        <fullName evidence="1">Nicotinate phosphoribosyltransferase</fullName>
        <shortName evidence="1">NAPRTase</shortName>
        <ecNumber evidence="1">6.3.4.21</ecNumber>
    </recommendedName>
</protein>
<evidence type="ECO:0000255" key="1">
    <source>
        <dbReference type="HAMAP-Rule" id="MF_00570"/>
    </source>
</evidence>
<comment type="function">
    <text evidence="1">Catalyzes the synthesis of beta-nicotinate D-ribonucleotide from nicotinate and 5-phospho-D-ribose 1-phosphate at the expense of ATP.</text>
</comment>
<comment type="catalytic activity">
    <reaction evidence="1">
        <text>nicotinate + 5-phospho-alpha-D-ribose 1-diphosphate + ATP + H2O = nicotinate beta-D-ribonucleotide + ADP + phosphate + diphosphate</text>
        <dbReference type="Rhea" id="RHEA:36163"/>
        <dbReference type="ChEBI" id="CHEBI:15377"/>
        <dbReference type="ChEBI" id="CHEBI:30616"/>
        <dbReference type="ChEBI" id="CHEBI:32544"/>
        <dbReference type="ChEBI" id="CHEBI:33019"/>
        <dbReference type="ChEBI" id="CHEBI:43474"/>
        <dbReference type="ChEBI" id="CHEBI:57502"/>
        <dbReference type="ChEBI" id="CHEBI:58017"/>
        <dbReference type="ChEBI" id="CHEBI:456216"/>
        <dbReference type="EC" id="6.3.4.21"/>
    </reaction>
</comment>
<comment type="pathway">
    <text evidence="1">Cofactor biosynthesis; NAD(+) biosynthesis; nicotinate D-ribonucleotide from nicotinate: step 1/1.</text>
</comment>
<comment type="PTM">
    <text evidence="1">Transiently phosphorylated on a His residue during the reaction cycle. Phosphorylation strongly increases the affinity for substrates and increases the rate of nicotinate D-ribonucleotide production. Dephosphorylation regenerates the low-affinity form of the enzyme, leading to product release.</text>
</comment>
<comment type="similarity">
    <text evidence="1">Belongs to the NAPRTase family.</text>
</comment>
<feature type="chain" id="PRO_1000025004" description="Nicotinate phosphoribosyltransferase">
    <location>
        <begin position="1"/>
        <end position="407"/>
    </location>
</feature>
<feature type="modified residue" description="Phosphohistidine; by autocatalysis" evidence="1">
    <location>
        <position position="224"/>
    </location>
</feature>
<keyword id="KW-0436">Ligase</keyword>
<keyword id="KW-0597">Phosphoprotein</keyword>
<keyword id="KW-0662">Pyridine nucleotide biosynthesis</keyword>
<reference key="1">
    <citation type="journal article" date="2005" name="J. Bacteriol.">
        <title>Whole-genome sequence analysis of Pseudomonas syringae pv. phaseolicola 1448A reveals divergence among pathovars in genes involved in virulence and transposition.</title>
        <authorList>
            <person name="Joardar V."/>
            <person name="Lindeberg M."/>
            <person name="Jackson R.W."/>
            <person name="Selengut J."/>
            <person name="Dodson R."/>
            <person name="Brinkac L.M."/>
            <person name="Daugherty S.C."/>
            <person name="DeBoy R.T."/>
            <person name="Durkin A.S."/>
            <person name="Gwinn Giglio M."/>
            <person name="Madupu R."/>
            <person name="Nelson W.C."/>
            <person name="Rosovitz M.J."/>
            <person name="Sullivan S.A."/>
            <person name="Crabtree J."/>
            <person name="Creasy T."/>
            <person name="Davidsen T.M."/>
            <person name="Haft D.H."/>
            <person name="Zafar N."/>
            <person name="Zhou L."/>
            <person name="Halpin R."/>
            <person name="Holley T."/>
            <person name="Khouri H.M."/>
            <person name="Feldblyum T.V."/>
            <person name="White O."/>
            <person name="Fraser C.M."/>
            <person name="Chatterjee A.K."/>
            <person name="Cartinhour S."/>
            <person name="Schneider D."/>
            <person name="Mansfield J.W."/>
            <person name="Collmer A."/>
            <person name="Buell R."/>
        </authorList>
    </citation>
    <scope>NUCLEOTIDE SEQUENCE [LARGE SCALE GENOMIC DNA]</scope>
    <source>
        <strain>1448A / Race 6</strain>
    </source>
</reference>
<organism>
    <name type="scientific">Pseudomonas savastanoi pv. phaseolicola (strain 1448A / Race 6)</name>
    <name type="common">Pseudomonas syringae pv. phaseolicola (strain 1448A / Race 6)</name>
    <dbReference type="NCBI Taxonomy" id="264730"/>
    <lineage>
        <taxon>Bacteria</taxon>
        <taxon>Pseudomonadati</taxon>
        <taxon>Pseudomonadota</taxon>
        <taxon>Gammaproteobacteria</taxon>
        <taxon>Pseudomonadales</taxon>
        <taxon>Pseudomonadaceae</taxon>
        <taxon>Pseudomonas</taxon>
    </lineage>
</organism>
<sequence length="407" mass="46662">MSESAFSNRIVQSLLDTDFYKLTMMQAVLHNYPNVDVEWEFRCRNGEDLRPYLDEIRHQIELLCELSLSPEHLAFLERITFIKPDFLRFLGLFRFNTRYVKTSIENDELCIRLHGPWLHVILFEVPLLAIVSEVRNRHRYPDTLLSQARDRLYDKFEWLTTHATADELAELKVADFGTRRRFSYRVQEEMLGVLKNDFPGQFVGTSNVHLARQLDLKPLGTMAHEWIMAHQQLGPRLIDSQIAALDCWVREYRGLLGIALTDCITTDAFLNDFDLYFAKLFDGLRHDSGDPVKWAEKCISHYQKLGIDPMSKTLVFSDGLNLPKALDIFRALRGRINVSFGIGTNLTADIPGIAPMNMVLKMTACAGQAVAKISDEPGKTQCKDPNFVAYLRHVFKVPDLPSPEKPA</sequence>
<accession>Q48NY1</accession>
<proteinExistence type="inferred from homology"/>
<name>PNCB_PSE14</name>